<keyword id="KW-0963">Cytoplasm</keyword>
<keyword id="KW-0274">FAD</keyword>
<keyword id="KW-0285">Flavoprotein</keyword>
<keyword id="KW-0520">NAD</keyword>
<keyword id="KW-0819">tRNA processing</keyword>
<evidence type="ECO:0000255" key="1">
    <source>
        <dbReference type="HAMAP-Rule" id="MF_00129"/>
    </source>
</evidence>
<gene>
    <name evidence="1" type="primary">mnmG</name>
    <name evidence="1" type="synonym">gidA</name>
    <name type="ordered locus">SAK_2100</name>
</gene>
<comment type="function">
    <text evidence="1">NAD-binding protein involved in the addition of a carboxymethylaminomethyl (cmnm) group at the wobble position (U34) of certain tRNAs, forming tRNA-cmnm(5)s(2)U34.</text>
</comment>
<comment type="cofactor">
    <cofactor evidence="1">
        <name>FAD</name>
        <dbReference type="ChEBI" id="CHEBI:57692"/>
    </cofactor>
</comment>
<comment type="subunit">
    <text evidence="1">Homodimer. Heterotetramer of two MnmE and two MnmG subunits.</text>
</comment>
<comment type="subcellular location">
    <subcellularLocation>
        <location evidence="1">Cytoplasm</location>
    </subcellularLocation>
</comment>
<comment type="similarity">
    <text evidence="1">Belongs to the MnmG family.</text>
</comment>
<name>MNMG_STRA1</name>
<proteinExistence type="inferred from homology"/>
<sequence>MTHNFAENYDIIVVGAGHAGVEASLAASRMGCKTLLATINLEMLAFMPCNPSIGGSAKGIVVREIDALGGEMGKNIDKTYIQMKMLNTGKGPAVRALRAQADKALYAQTMKQTVEKQENLTLRQAMIDEILVEDGKVVGVRTATNQKFSAKSVVITTGTALRGEIILGELKYSSGPNNSLASVTLADNLRDLGLEIGRFKTGTPPRVKASSINYEKTEIQPGDEQPNHFSFMSRDEDYITDQVPCWLTYTNTLSHDIINQNLHRAPMFSGIVKGVGPRYCPSIEDKIVRFADKERHQLFLEPEGRHTEEVYVQGLSTSLPEDVQVDLLRSIKGLENAEMMRTGYAIEYDIVLPHQLRATLETKVIAGLFTAGQTNGTSGYEEAAGQGLVAGINAALKVQGKPELILKRSDAYIGVMIDDLVTKGTLEPYRLLTSRAEYRLILRHDNADMRLTEIGYEIGLVDEERYAIFKKRQMQFENELERLDSIKLKPVSETNKRIQELGFKPLTDALTAKEFMRRPQITYAVATDFVGCADEPLDSKVIELLETEIKYEGYIKKALDQVAKMKRMEEKRIPPHIDWDDIDSIATEARQKFKKINPETLGQASRISGVNPADISILMVYLEGRQKGRKNIN</sequence>
<organism>
    <name type="scientific">Streptococcus agalactiae serotype Ia (strain ATCC 27591 / A909 / CDC SS700)</name>
    <dbReference type="NCBI Taxonomy" id="205921"/>
    <lineage>
        <taxon>Bacteria</taxon>
        <taxon>Bacillati</taxon>
        <taxon>Bacillota</taxon>
        <taxon>Bacilli</taxon>
        <taxon>Lactobacillales</taxon>
        <taxon>Streptococcaceae</taxon>
        <taxon>Streptococcus</taxon>
    </lineage>
</organism>
<feature type="chain" id="PRO_1000016687" description="tRNA uridine 5-carboxymethylaminomethyl modification enzyme MnmG">
    <location>
        <begin position="1"/>
        <end position="633"/>
    </location>
</feature>
<feature type="binding site" evidence="1">
    <location>
        <begin position="15"/>
        <end position="20"/>
    </location>
    <ligand>
        <name>FAD</name>
        <dbReference type="ChEBI" id="CHEBI:57692"/>
    </ligand>
</feature>
<feature type="binding site" evidence="1">
    <location>
        <position position="127"/>
    </location>
    <ligand>
        <name>FAD</name>
        <dbReference type="ChEBI" id="CHEBI:57692"/>
    </ligand>
</feature>
<feature type="binding site" evidence="1">
    <location>
        <position position="182"/>
    </location>
    <ligand>
        <name>FAD</name>
        <dbReference type="ChEBI" id="CHEBI:57692"/>
    </ligand>
</feature>
<feature type="binding site" evidence="1">
    <location>
        <begin position="276"/>
        <end position="290"/>
    </location>
    <ligand>
        <name>NAD(+)</name>
        <dbReference type="ChEBI" id="CHEBI:57540"/>
    </ligand>
</feature>
<feature type="binding site" evidence="1">
    <location>
        <position position="373"/>
    </location>
    <ligand>
        <name>FAD</name>
        <dbReference type="ChEBI" id="CHEBI:57692"/>
    </ligand>
</feature>
<accession>Q3JYG3</accession>
<protein>
    <recommendedName>
        <fullName evidence="1">tRNA uridine 5-carboxymethylaminomethyl modification enzyme MnmG</fullName>
    </recommendedName>
    <alternativeName>
        <fullName evidence="1">Glucose-inhibited division protein A</fullName>
    </alternativeName>
</protein>
<reference key="1">
    <citation type="journal article" date="2005" name="Proc. Natl. Acad. Sci. U.S.A.">
        <title>Genome analysis of multiple pathogenic isolates of Streptococcus agalactiae: implications for the microbial 'pan-genome'.</title>
        <authorList>
            <person name="Tettelin H."/>
            <person name="Masignani V."/>
            <person name="Cieslewicz M.J."/>
            <person name="Donati C."/>
            <person name="Medini D."/>
            <person name="Ward N.L."/>
            <person name="Angiuoli S.V."/>
            <person name="Crabtree J."/>
            <person name="Jones A.L."/>
            <person name="Durkin A.S."/>
            <person name="DeBoy R.T."/>
            <person name="Davidsen T.M."/>
            <person name="Mora M."/>
            <person name="Scarselli M."/>
            <person name="Margarit y Ros I."/>
            <person name="Peterson J.D."/>
            <person name="Hauser C.R."/>
            <person name="Sundaram J.P."/>
            <person name="Nelson W.C."/>
            <person name="Madupu R."/>
            <person name="Brinkac L.M."/>
            <person name="Dodson R.J."/>
            <person name="Rosovitz M.J."/>
            <person name="Sullivan S.A."/>
            <person name="Daugherty S.C."/>
            <person name="Haft D.H."/>
            <person name="Selengut J."/>
            <person name="Gwinn M.L."/>
            <person name="Zhou L."/>
            <person name="Zafar N."/>
            <person name="Khouri H."/>
            <person name="Radune D."/>
            <person name="Dimitrov G."/>
            <person name="Watkins K."/>
            <person name="O'Connor K.J."/>
            <person name="Smith S."/>
            <person name="Utterback T.R."/>
            <person name="White O."/>
            <person name="Rubens C.E."/>
            <person name="Grandi G."/>
            <person name="Madoff L.C."/>
            <person name="Kasper D.L."/>
            <person name="Telford J.L."/>
            <person name="Wessels M.R."/>
            <person name="Rappuoli R."/>
            <person name="Fraser C.M."/>
        </authorList>
    </citation>
    <scope>NUCLEOTIDE SEQUENCE [LARGE SCALE GENOMIC DNA]</scope>
    <source>
        <strain>ATCC 27591 / A909 / CDC SS700</strain>
    </source>
</reference>
<dbReference type="EMBL" id="CP000114">
    <property type="protein sequence ID" value="ABA44362.1"/>
    <property type="molecule type" value="Genomic_DNA"/>
</dbReference>
<dbReference type="RefSeq" id="WP_000149491.1">
    <property type="nucleotide sequence ID" value="NC_007432.1"/>
</dbReference>
<dbReference type="SMR" id="Q3JYG3"/>
<dbReference type="KEGG" id="sak:SAK_2100"/>
<dbReference type="HOGENOM" id="CLU_007831_2_2_9"/>
<dbReference type="GO" id="GO:0005829">
    <property type="term" value="C:cytosol"/>
    <property type="evidence" value="ECO:0007669"/>
    <property type="project" value="TreeGrafter"/>
</dbReference>
<dbReference type="GO" id="GO:0050660">
    <property type="term" value="F:flavin adenine dinucleotide binding"/>
    <property type="evidence" value="ECO:0007669"/>
    <property type="project" value="UniProtKB-UniRule"/>
</dbReference>
<dbReference type="GO" id="GO:0030488">
    <property type="term" value="P:tRNA methylation"/>
    <property type="evidence" value="ECO:0007669"/>
    <property type="project" value="TreeGrafter"/>
</dbReference>
<dbReference type="GO" id="GO:0002098">
    <property type="term" value="P:tRNA wobble uridine modification"/>
    <property type="evidence" value="ECO:0007669"/>
    <property type="project" value="InterPro"/>
</dbReference>
<dbReference type="FunFam" id="1.10.10.1800:FF:000001">
    <property type="entry name" value="tRNA uridine 5-carboxymethylaminomethyl modification enzyme MnmG"/>
    <property type="match status" value="1"/>
</dbReference>
<dbReference type="FunFam" id="1.10.150.570:FF:000001">
    <property type="entry name" value="tRNA uridine 5-carboxymethylaminomethyl modification enzyme MnmG"/>
    <property type="match status" value="1"/>
</dbReference>
<dbReference type="FunFam" id="3.50.50.60:FF:000002">
    <property type="entry name" value="tRNA uridine 5-carboxymethylaminomethyl modification enzyme MnmG"/>
    <property type="match status" value="1"/>
</dbReference>
<dbReference type="FunFam" id="3.50.50.60:FF:000063">
    <property type="entry name" value="tRNA uridine 5-carboxymethylaminomethyl modification enzyme MnmG"/>
    <property type="match status" value="1"/>
</dbReference>
<dbReference type="Gene3D" id="3.50.50.60">
    <property type="entry name" value="FAD/NAD(P)-binding domain"/>
    <property type="match status" value="2"/>
</dbReference>
<dbReference type="Gene3D" id="1.10.150.570">
    <property type="entry name" value="GidA associated domain, C-terminal subdomain"/>
    <property type="match status" value="1"/>
</dbReference>
<dbReference type="Gene3D" id="1.10.10.1800">
    <property type="entry name" value="tRNA uridine 5-carboxymethylaminomethyl modification enzyme MnmG/GidA"/>
    <property type="match status" value="1"/>
</dbReference>
<dbReference type="HAMAP" id="MF_00129">
    <property type="entry name" value="MnmG_GidA"/>
    <property type="match status" value="1"/>
</dbReference>
<dbReference type="InterPro" id="IPR036188">
    <property type="entry name" value="FAD/NAD-bd_sf"/>
</dbReference>
<dbReference type="InterPro" id="IPR049312">
    <property type="entry name" value="GIDA_C_N"/>
</dbReference>
<dbReference type="InterPro" id="IPR004416">
    <property type="entry name" value="MnmG"/>
</dbReference>
<dbReference type="InterPro" id="IPR002218">
    <property type="entry name" value="MnmG-rel"/>
</dbReference>
<dbReference type="InterPro" id="IPR020595">
    <property type="entry name" value="MnmG-rel_CS"/>
</dbReference>
<dbReference type="InterPro" id="IPR026904">
    <property type="entry name" value="MnmG_C"/>
</dbReference>
<dbReference type="InterPro" id="IPR047001">
    <property type="entry name" value="MnmG_C_subdom"/>
</dbReference>
<dbReference type="InterPro" id="IPR044920">
    <property type="entry name" value="MnmG_C_subdom_sf"/>
</dbReference>
<dbReference type="InterPro" id="IPR040131">
    <property type="entry name" value="MnmG_N"/>
</dbReference>
<dbReference type="NCBIfam" id="TIGR00136">
    <property type="entry name" value="mnmG_gidA"/>
    <property type="match status" value="1"/>
</dbReference>
<dbReference type="PANTHER" id="PTHR11806">
    <property type="entry name" value="GLUCOSE INHIBITED DIVISION PROTEIN A"/>
    <property type="match status" value="1"/>
</dbReference>
<dbReference type="PANTHER" id="PTHR11806:SF0">
    <property type="entry name" value="PROTEIN MTO1 HOMOLOG, MITOCHONDRIAL"/>
    <property type="match status" value="1"/>
</dbReference>
<dbReference type="Pfam" id="PF01134">
    <property type="entry name" value="GIDA"/>
    <property type="match status" value="1"/>
</dbReference>
<dbReference type="Pfam" id="PF21680">
    <property type="entry name" value="GIDA_C_1st"/>
    <property type="match status" value="1"/>
</dbReference>
<dbReference type="Pfam" id="PF13932">
    <property type="entry name" value="SAM_GIDA_C"/>
    <property type="match status" value="1"/>
</dbReference>
<dbReference type="PRINTS" id="PR00411">
    <property type="entry name" value="PNDRDTASEI"/>
</dbReference>
<dbReference type="SMART" id="SM01228">
    <property type="entry name" value="GIDA_assoc_3"/>
    <property type="match status" value="1"/>
</dbReference>
<dbReference type="SUPFAM" id="SSF51905">
    <property type="entry name" value="FAD/NAD(P)-binding domain"/>
    <property type="match status" value="1"/>
</dbReference>
<dbReference type="PROSITE" id="PS01280">
    <property type="entry name" value="GIDA_1"/>
    <property type="match status" value="1"/>
</dbReference>
<dbReference type="PROSITE" id="PS01281">
    <property type="entry name" value="GIDA_2"/>
    <property type="match status" value="1"/>
</dbReference>